<reference key="1">
    <citation type="journal article" date="1981" name="Nature">
        <title>Two variant surface glycoproteins of Trypanosoma brucei have a conserved C-terminus.</title>
        <authorList>
            <person name="Matthyssens G."/>
            <person name="Michiels F."/>
            <person name="Hamers R."/>
            <person name="Pays E."/>
            <person name="Steinert M."/>
        </authorList>
    </citation>
    <scope>NUCLEOTIDE SEQUENCE [MRNA]</scope>
</reference>
<protein>
    <recommendedName>
        <fullName>Variant surface glycoprotein ANTAT 1.8</fullName>
        <shortName>VSG</shortName>
    </recommendedName>
</protein>
<keyword id="KW-1003">Cell membrane</keyword>
<keyword id="KW-0325">Glycoprotein</keyword>
<keyword id="KW-0336">GPI-anchor</keyword>
<keyword id="KW-0449">Lipoprotein</keyword>
<keyword id="KW-0472">Membrane</keyword>
<keyword id="KW-0821">Trypanosomiasis</keyword>
<comment type="function">
    <text>VSG forms a coat on the surface of the parasite. The trypanosome evades the immune response of the host by expressing a series of antigenically distinct VSGs from an estimated 1000 VSG genes.</text>
</comment>
<comment type="subcellular location">
    <subcellularLocation>
        <location>Cell membrane</location>
        <topology>Lipid-anchor</topology>
        <topology>GPI-anchor</topology>
    </subcellularLocation>
    <text evidence="1">A soluble form is released from ruptured cells by the action of a PI-PLC.</text>
</comment>
<organism>
    <name type="scientific">Trypanosoma brucei brucei</name>
    <dbReference type="NCBI Taxonomy" id="5702"/>
    <lineage>
        <taxon>Eukaryota</taxon>
        <taxon>Discoba</taxon>
        <taxon>Euglenozoa</taxon>
        <taxon>Kinetoplastea</taxon>
        <taxon>Metakinetoplastina</taxon>
        <taxon>Trypanosomatida</taxon>
        <taxon>Trypanosomatidae</taxon>
        <taxon>Trypanosoma</taxon>
    </lineage>
</organism>
<feature type="chain" id="PRO_0000036413" description="Variant surface glycoprotein ANTAT 1.8">
    <location>
        <begin position="1" status="less than"/>
        <end position="92"/>
    </location>
</feature>
<feature type="propeptide" id="PRO_0000036414" description="Removed in mature form" evidence="1">
    <location>
        <begin position="93"/>
        <end position="115"/>
    </location>
</feature>
<feature type="lipid moiety-binding region" description="GPI-anchor amidated aspartate" evidence="1">
    <location>
        <position position="92"/>
    </location>
</feature>
<feature type="glycosylation site" description="N-linked (GlcNAc...) asparagine" evidence="2">
    <location>
        <position position="42"/>
    </location>
</feature>
<feature type="non-terminal residue">
    <location>
        <position position="1"/>
    </location>
</feature>
<evidence type="ECO:0000250" key="1"/>
<evidence type="ECO:0000255" key="2"/>
<name>VSA8_TRYBB</name>
<dbReference type="EMBL" id="J01227">
    <property type="protein sequence ID" value="AAA30292.1"/>
    <property type="molecule type" value="mRNA"/>
</dbReference>
<dbReference type="PIR" id="S07326">
    <property type="entry name" value="S07326"/>
</dbReference>
<dbReference type="SMR" id="P06017"/>
<dbReference type="GO" id="GO:0005886">
    <property type="term" value="C:plasma membrane"/>
    <property type="evidence" value="ECO:0007669"/>
    <property type="project" value="UniProtKB-SubCell"/>
</dbReference>
<dbReference type="GO" id="GO:0098552">
    <property type="term" value="C:side of membrane"/>
    <property type="evidence" value="ECO:0007669"/>
    <property type="project" value="UniProtKB-KW"/>
</dbReference>
<dbReference type="FunFam" id="3.30.1680.30:FF:000002">
    <property type="entry name" value="Variant surface glycoprotein (VSG, atypical), putative"/>
    <property type="match status" value="1"/>
</dbReference>
<dbReference type="Gene3D" id="3.30.1680.30">
    <property type="match status" value="1"/>
</dbReference>
<dbReference type="Gene3D" id="3.30.1680.40">
    <property type="match status" value="1"/>
</dbReference>
<dbReference type="InterPro" id="IPR019609">
    <property type="entry name" value="Variant_surf_glycoprt_trypan_C"/>
</dbReference>
<dbReference type="Pfam" id="PF10659">
    <property type="entry name" value="Trypan_glycop_C"/>
    <property type="match status" value="1"/>
</dbReference>
<proteinExistence type="evidence at transcript level"/>
<accession>P06017</accession>
<sequence length="115" mass="12530">DQKGKSPESECNKISEEPKCNEDKICSWHKEVKAGEKHCKFNSTKAKEKGVAVTQTQTAGGTEATTDKCKGKLEDTCKKESNCKWEGETCKDSSILVNKQLALSVVSAAFAALLF</sequence>